<evidence type="ECO:0000255" key="1">
    <source>
        <dbReference type="HAMAP-Rule" id="MF_00391"/>
    </source>
</evidence>
<evidence type="ECO:0000256" key="2">
    <source>
        <dbReference type="SAM" id="MobiDB-lite"/>
    </source>
</evidence>
<evidence type="ECO:0000305" key="3"/>
<accession>A1KS01</accession>
<feature type="chain" id="PRO_1000013383" description="Large ribosomal subunit protein bL34">
    <location>
        <begin position="1"/>
        <end position="44"/>
    </location>
</feature>
<feature type="region of interest" description="Disordered" evidence="2">
    <location>
        <begin position="24"/>
        <end position="44"/>
    </location>
</feature>
<feature type="compositionally biased region" description="Basic residues" evidence="2">
    <location>
        <begin position="34"/>
        <end position="44"/>
    </location>
</feature>
<organism>
    <name type="scientific">Neisseria meningitidis serogroup C / serotype 2a (strain ATCC 700532 / DSM 15464 / FAM18)</name>
    <dbReference type="NCBI Taxonomy" id="272831"/>
    <lineage>
        <taxon>Bacteria</taxon>
        <taxon>Pseudomonadati</taxon>
        <taxon>Pseudomonadota</taxon>
        <taxon>Betaproteobacteria</taxon>
        <taxon>Neisseriales</taxon>
        <taxon>Neisseriaceae</taxon>
        <taxon>Neisseria</taxon>
    </lineage>
</organism>
<proteinExistence type="inferred from homology"/>
<dbReference type="EMBL" id="AM421808">
    <property type="protein sequence ID" value="CAM09630.1"/>
    <property type="molecule type" value="Genomic_DNA"/>
</dbReference>
<dbReference type="RefSeq" id="WP_002214728.1">
    <property type="nucleotide sequence ID" value="NC_008767.1"/>
</dbReference>
<dbReference type="SMR" id="A1KS01"/>
<dbReference type="GeneID" id="94582113"/>
<dbReference type="KEGG" id="nmc:NMC0319"/>
<dbReference type="HOGENOM" id="CLU_129938_2_0_4"/>
<dbReference type="Proteomes" id="UP000002286">
    <property type="component" value="Chromosome"/>
</dbReference>
<dbReference type="GO" id="GO:1990904">
    <property type="term" value="C:ribonucleoprotein complex"/>
    <property type="evidence" value="ECO:0007669"/>
    <property type="project" value="UniProtKB-KW"/>
</dbReference>
<dbReference type="GO" id="GO:0005840">
    <property type="term" value="C:ribosome"/>
    <property type="evidence" value="ECO:0007669"/>
    <property type="project" value="UniProtKB-KW"/>
</dbReference>
<dbReference type="GO" id="GO:0003735">
    <property type="term" value="F:structural constituent of ribosome"/>
    <property type="evidence" value="ECO:0007669"/>
    <property type="project" value="InterPro"/>
</dbReference>
<dbReference type="GO" id="GO:0006412">
    <property type="term" value="P:translation"/>
    <property type="evidence" value="ECO:0007669"/>
    <property type="project" value="UniProtKB-UniRule"/>
</dbReference>
<dbReference type="FunFam" id="1.10.287.3980:FF:000001">
    <property type="entry name" value="Mitochondrial ribosomal protein L34"/>
    <property type="match status" value="1"/>
</dbReference>
<dbReference type="Gene3D" id="1.10.287.3980">
    <property type="match status" value="1"/>
</dbReference>
<dbReference type="HAMAP" id="MF_00391">
    <property type="entry name" value="Ribosomal_bL34"/>
    <property type="match status" value="1"/>
</dbReference>
<dbReference type="InterPro" id="IPR000271">
    <property type="entry name" value="Ribosomal_bL34"/>
</dbReference>
<dbReference type="InterPro" id="IPR020939">
    <property type="entry name" value="Ribosomal_bL34_CS"/>
</dbReference>
<dbReference type="NCBIfam" id="TIGR01030">
    <property type="entry name" value="rpmH_bact"/>
    <property type="match status" value="1"/>
</dbReference>
<dbReference type="PANTHER" id="PTHR14503:SF4">
    <property type="entry name" value="LARGE RIBOSOMAL SUBUNIT PROTEIN BL34M"/>
    <property type="match status" value="1"/>
</dbReference>
<dbReference type="PANTHER" id="PTHR14503">
    <property type="entry name" value="MITOCHONDRIAL RIBOSOMAL PROTEIN 34 FAMILY MEMBER"/>
    <property type="match status" value="1"/>
</dbReference>
<dbReference type="Pfam" id="PF00468">
    <property type="entry name" value="Ribosomal_L34"/>
    <property type="match status" value="1"/>
</dbReference>
<dbReference type="PROSITE" id="PS00784">
    <property type="entry name" value="RIBOSOMAL_L34"/>
    <property type="match status" value="1"/>
</dbReference>
<protein>
    <recommendedName>
        <fullName evidence="1">Large ribosomal subunit protein bL34</fullName>
    </recommendedName>
    <alternativeName>
        <fullName evidence="3">50S ribosomal protein L34</fullName>
    </alternativeName>
</protein>
<reference key="1">
    <citation type="journal article" date="2007" name="PLoS Genet.">
        <title>Meningococcal genetic variation mechanisms viewed through comparative analysis of serogroup C strain FAM18.</title>
        <authorList>
            <person name="Bentley S.D."/>
            <person name="Vernikos G.S."/>
            <person name="Snyder L.A.S."/>
            <person name="Churcher C."/>
            <person name="Arrowsmith C."/>
            <person name="Chillingworth T."/>
            <person name="Cronin A."/>
            <person name="Davis P.H."/>
            <person name="Holroyd N.E."/>
            <person name="Jagels K."/>
            <person name="Maddison M."/>
            <person name="Moule S."/>
            <person name="Rabbinowitsch E."/>
            <person name="Sharp S."/>
            <person name="Unwin L."/>
            <person name="Whitehead S."/>
            <person name="Quail M.A."/>
            <person name="Achtman M."/>
            <person name="Barrell B.G."/>
            <person name="Saunders N.J."/>
            <person name="Parkhill J."/>
        </authorList>
    </citation>
    <scope>NUCLEOTIDE SEQUENCE [LARGE SCALE GENOMIC DNA]</scope>
    <source>
        <strain>ATCC 700532 / DSM 15464 / FAM18</strain>
    </source>
</reference>
<keyword id="KW-0687">Ribonucleoprotein</keyword>
<keyword id="KW-0689">Ribosomal protein</keyword>
<comment type="similarity">
    <text evidence="1">Belongs to the bacterial ribosomal protein bL34 family.</text>
</comment>
<sequence length="44" mass="5051">MKRTYQPSVTKRKRTHGFLVRSKTRGGRAVLAARRAKGRKRLAV</sequence>
<gene>
    <name evidence="1" type="primary">rpmH</name>
    <name type="ordered locus">NMC0319</name>
</gene>
<name>RL34_NEIMF</name>